<feature type="chain" id="PRO_1000116083" description="Ferrochelatase">
    <location>
        <begin position="1"/>
        <end position="320"/>
    </location>
</feature>
<feature type="binding site" evidence="1">
    <location>
        <position position="194"/>
    </location>
    <ligand>
        <name>Fe cation</name>
        <dbReference type="ChEBI" id="CHEBI:24875"/>
    </ligand>
</feature>
<feature type="binding site" evidence="1">
    <location>
        <position position="275"/>
    </location>
    <ligand>
        <name>Fe cation</name>
        <dbReference type="ChEBI" id="CHEBI:24875"/>
    </ligand>
</feature>
<protein>
    <recommendedName>
        <fullName evidence="1">Ferrochelatase</fullName>
        <ecNumber evidence="1">4.98.1.1</ecNumber>
    </recommendedName>
    <alternativeName>
        <fullName evidence="1">Heme synthase</fullName>
    </alternativeName>
    <alternativeName>
        <fullName evidence="1">Protoheme ferro-lyase</fullName>
    </alternativeName>
</protein>
<dbReference type="EC" id="4.98.1.1" evidence="1"/>
<dbReference type="EMBL" id="CP001111">
    <property type="protein sequence ID" value="ACF53690.1"/>
    <property type="molecule type" value="Genomic_DNA"/>
</dbReference>
<dbReference type="RefSeq" id="WP_012512523.1">
    <property type="nucleotide sequence ID" value="NC_011071.1"/>
</dbReference>
<dbReference type="SMR" id="B4SNS0"/>
<dbReference type="STRING" id="391008.Smal_3991"/>
<dbReference type="KEGG" id="smt:Smal_3991"/>
<dbReference type="eggNOG" id="COG0276">
    <property type="taxonomic scope" value="Bacteria"/>
</dbReference>
<dbReference type="HOGENOM" id="CLU_018884_0_0_6"/>
<dbReference type="OrthoDB" id="9809741at2"/>
<dbReference type="UniPathway" id="UPA00252">
    <property type="reaction ID" value="UER00325"/>
</dbReference>
<dbReference type="Proteomes" id="UP000001867">
    <property type="component" value="Chromosome"/>
</dbReference>
<dbReference type="GO" id="GO:0005737">
    <property type="term" value="C:cytoplasm"/>
    <property type="evidence" value="ECO:0007669"/>
    <property type="project" value="UniProtKB-SubCell"/>
</dbReference>
<dbReference type="GO" id="GO:0004325">
    <property type="term" value="F:ferrochelatase activity"/>
    <property type="evidence" value="ECO:0007669"/>
    <property type="project" value="UniProtKB-UniRule"/>
</dbReference>
<dbReference type="GO" id="GO:0046872">
    <property type="term" value="F:metal ion binding"/>
    <property type="evidence" value="ECO:0007669"/>
    <property type="project" value="UniProtKB-KW"/>
</dbReference>
<dbReference type="GO" id="GO:0006783">
    <property type="term" value="P:heme biosynthetic process"/>
    <property type="evidence" value="ECO:0007669"/>
    <property type="project" value="UniProtKB-UniRule"/>
</dbReference>
<dbReference type="CDD" id="cd00419">
    <property type="entry name" value="Ferrochelatase_C"/>
    <property type="match status" value="1"/>
</dbReference>
<dbReference type="CDD" id="cd03411">
    <property type="entry name" value="Ferrochelatase_N"/>
    <property type="match status" value="1"/>
</dbReference>
<dbReference type="FunFam" id="3.40.50.1400:FF:000012">
    <property type="entry name" value="Ferrochelatase"/>
    <property type="match status" value="1"/>
</dbReference>
<dbReference type="Gene3D" id="3.40.50.1400">
    <property type="match status" value="2"/>
</dbReference>
<dbReference type="HAMAP" id="MF_00323">
    <property type="entry name" value="Ferrochelatase"/>
    <property type="match status" value="1"/>
</dbReference>
<dbReference type="InterPro" id="IPR001015">
    <property type="entry name" value="Ferrochelatase"/>
</dbReference>
<dbReference type="InterPro" id="IPR019772">
    <property type="entry name" value="Ferrochelatase_AS"/>
</dbReference>
<dbReference type="InterPro" id="IPR033644">
    <property type="entry name" value="Ferrochelatase_C"/>
</dbReference>
<dbReference type="InterPro" id="IPR033659">
    <property type="entry name" value="Ferrochelatase_N"/>
</dbReference>
<dbReference type="NCBIfam" id="TIGR00109">
    <property type="entry name" value="hemH"/>
    <property type="match status" value="1"/>
</dbReference>
<dbReference type="PANTHER" id="PTHR11108">
    <property type="entry name" value="FERROCHELATASE"/>
    <property type="match status" value="1"/>
</dbReference>
<dbReference type="PANTHER" id="PTHR11108:SF1">
    <property type="entry name" value="FERROCHELATASE, MITOCHONDRIAL"/>
    <property type="match status" value="1"/>
</dbReference>
<dbReference type="Pfam" id="PF00762">
    <property type="entry name" value="Ferrochelatase"/>
    <property type="match status" value="1"/>
</dbReference>
<dbReference type="SUPFAM" id="SSF53800">
    <property type="entry name" value="Chelatase"/>
    <property type="match status" value="1"/>
</dbReference>
<dbReference type="PROSITE" id="PS00534">
    <property type="entry name" value="FERROCHELATASE"/>
    <property type="match status" value="1"/>
</dbReference>
<name>HEMH_STRM5</name>
<keyword id="KW-0963">Cytoplasm</keyword>
<keyword id="KW-0350">Heme biosynthesis</keyword>
<keyword id="KW-0408">Iron</keyword>
<keyword id="KW-0456">Lyase</keyword>
<keyword id="KW-0479">Metal-binding</keyword>
<keyword id="KW-0627">Porphyrin biosynthesis</keyword>
<reference key="1">
    <citation type="submission" date="2008-06" db="EMBL/GenBank/DDBJ databases">
        <title>Complete sequence of Stenotrophomonas maltophilia R551-3.</title>
        <authorList>
            <consortium name="US DOE Joint Genome Institute"/>
            <person name="Lucas S."/>
            <person name="Copeland A."/>
            <person name="Lapidus A."/>
            <person name="Glavina del Rio T."/>
            <person name="Dalin E."/>
            <person name="Tice H."/>
            <person name="Pitluck S."/>
            <person name="Chain P."/>
            <person name="Malfatti S."/>
            <person name="Shin M."/>
            <person name="Vergez L."/>
            <person name="Lang D."/>
            <person name="Schmutz J."/>
            <person name="Larimer F."/>
            <person name="Land M."/>
            <person name="Hauser L."/>
            <person name="Kyrpides N."/>
            <person name="Mikhailova N."/>
            <person name="Taghavi S."/>
            <person name="Monchy S."/>
            <person name="Newman L."/>
            <person name="Vangronsveld J."/>
            <person name="van der Lelie D."/>
            <person name="Richardson P."/>
        </authorList>
    </citation>
    <scope>NUCLEOTIDE SEQUENCE [LARGE SCALE GENOMIC DNA]</scope>
    <source>
        <strain>R551-3</strain>
    </source>
</reference>
<evidence type="ECO:0000255" key="1">
    <source>
        <dbReference type="HAMAP-Rule" id="MF_00323"/>
    </source>
</evidence>
<proteinExistence type="inferred from homology"/>
<sequence length="320" mass="35154">MLDAPDTAVLAVNLGTPETPTAPAVRRYLAEFLSDPRVVSIPALLWQPLLRGLILPLRSSRSAAKYAQVWLPDGSPLMVYTRQLAQAMQALLPSLTVRHAMRYGEPALGSELDCLAAEGARRIVVLPLYPQYSTTTTASVEDRVDAWQRRNPGVTVSLVRDYSVDPGWVEAVAGSIRRYWEQQGRGQTLMFSFHGIPQRLADGGDPYPQRCEASARAIANALGLASDEWQLGYQSRFGRERWLQPYAEPSLWALAESGVKQIDVVCPGFATDCLETLEEVAMGFTETLAERGATMRYIPCLNAEPDHARALARLAVASLA</sequence>
<comment type="function">
    <text evidence="1">Catalyzes the ferrous insertion into protoporphyrin IX.</text>
</comment>
<comment type="catalytic activity">
    <reaction evidence="1">
        <text>heme b + 2 H(+) = protoporphyrin IX + Fe(2+)</text>
        <dbReference type="Rhea" id="RHEA:22584"/>
        <dbReference type="ChEBI" id="CHEBI:15378"/>
        <dbReference type="ChEBI" id="CHEBI:29033"/>
        <dbReference type="ChEBI" id="CHEBI:57306"/>
        <dbReference type="ChEBI" id="CHEBI:60344"/>
        <dbReference type="EC" id="4.98.1.1"/>
    </reaction>
</comment>
<comment type="pathway">
    <text evidence="1">Porphyrin-containing compound metabolism; protoheme biosynthesis; protoheme from protoporphyrin-IX: step 1/1.</text>
</comment>
<comment type="subcellular location">
    <subcellularLocation>
        <location evidence="1">Cytoplasm</location>
    </subcellularLocation>
</comment>
<comment type="similarity">
    <text evidence="1">Belongs to the ferrochelatase family.</text>
</comment>
<accession>B4SNS0</accession>
<gene>
    <name evidence="1" type="primary">hemH</name>
    <name type="ordered locus">Smal_3991</name>
</gene>
<organism>
    <name type="scientific">Stenotrophomonas maltophilia (strain R551-3)</name>
    <dbReference type="NCBI Taxonomy" id="391008"/>
    <lineage>
        <taxon>Bacteria</taxon>
        <taxon>Pseudomonadati</taxon>
        <taxon>Pseudomonadota</taxon>
        <taxon>Gammaproteobacteria</taxon>
        <taxon>Lysobacterales</taxon>
        <taxon>Lysobacteraceae</taxon>
        <taxon>Stenotrophomonas</taxon>
        <taxon>Stenotrophomonas maltophilia group</taxon>
    </lineage>
</organism>